<protein>
    <recommendedName>
        <fullName evidence="1">Glutamyl-tRNA(Gln) amidotransferase subunit A</fullName>
        <shortName evidence="1">Glu-ADT subunit A</shortName>
        <ecNumber evidence="1">6.3.5.7</ecNumber>
    </recommendedName>
</protein>
<feature type="chain" id="PRO_1000015818" description="Glutamyl-tRNA(Gln) amidotransferase subunit A">
    <location>
        <begin position="1"/>
        <end position="453"/>
    </location>
</feature>
<feature type="active site" description="Charge relay system" evidence="1">
    <location>
        <position position="56"/>
    </location>
</feature>
<feature type="active site" description="Charge relay system" evidence="1">
    <location>
        <position position="131"/>
    </location>
</feature>
<feature type="active site" description="Acyl-ester intermediate" evidence="1">
    <location>
        <position position="155"/>
    </location>
</feature>
<reference key="1">
    <citation type="submission" date="2007-07" db="EMBL/GenBank/DDBJ databases">
        <title>Complete genome sequence of Campylobacter jejuni subsp doylei 269.97 isolated from human blood.</title>
        <authorList>
            <person name="Fouts D.E."/>
            <person name="Mongodin E.F."/>
            <person name="Puiu D."/>
            <person name="Sebastian Y."/>
            <person name="Miller W.G."/>
            <person name="Mandrell R.E."/>
            <person name="Lastovica A.J."/>
            <person name="Nelson K.E."/>
        </authorList>
    </citation>
    <scope>NUCLEOTIDE SEQUENCE [LARGE SCALE GENOMIC DNA]</scope>
    <source>
        <strain>ATCC BAA-1458 / RM4099 / 269.97</strain>
    </source>
</reference>
<comment type="function">
    <text evidence="1">Allows the formation of correctly charged Gln-tRNA(Gln) through the transamidation of misacylated Glu-tRNA(Gln) in organisms which lack glutaminyl-tRNA synthetase. The reaction takes place in the presence of glutamine and ATP through an activated gamma-phospho-Glu-tRNA(Gln).</text>
</comment>
<comment type="catalytic activity">
    <reaction evidence="1">
        <text>L-glutamyl-tRNA(Gln) + L-glutamine + ATP + H2O = L-glutaminyl-tRNA(Gln) + L-glutamate + ADP + phosphate + H(+)</text>
        <dbReference type="Rhea" id="RHEA:17521"/>
        <dbReference type="Rhea" id="RHEA-COMP:9681"/>
        <dbReference type="Rhea" id="RHEA-COMP:9684"/>
        <dbReference type="ChEBI" id="CHEBI:15377"/>
        <dbReference type="ChEBI" id="CHEBI:15378"/>
        <dbReference type="ChEBI" id="CHEBI:29985"/>
        <dbReference type="ChEBI" id="CHEBI:30616"/>
        <dbReference type="ChEBI" id="CHEBI:43474"/>
        <dbReference type="ChEBI" id="CHEBI:58359"/>
        <dbReference type="ChEBI" id="CHEBI:78520"/>
        <dbReference type="ChEBI" id="CHEBI:78521"/>
        <dbReference type="ChEBI" id="CHEBI:456216"/>
        <dbReference type="EC" id="6.3.5.7"/>
    </reaction>
</comment>
<comment type="subunit">
    <text evidence="1">Heterotrimer of A, B and C subunits.</text>
</comment>
<comment type="similarity">
    <text evidence="1">Belongs to the amidase family. GatA subfamily.</text>
</comment>
<evidence type="ECO:0000255" key="1">
    <source>
        <dbReference type="HAMAP-Rule" id="MF_00120"/>
    </source>
</evidence>
<name>GATA_CAMJD</name>
<proteinExistence type="inferred from homology"/>
<sequence length="453" mass="49285">MITLKEALKYSKEELENLKKELNEKAKKEKKLGAYIEQFLDKDLSVSGEGVPVAIKDNISVKGWELTSASKILQGYIAPYDASAIVNLKANGFAPFGRCNMDEFAMGSSTASSCYGKTLNPLNFERVPGGSSGGSAAAVAGGLALASLGSDTGGSVRQPAAFCGCVGFKPSYGRVSRYGLASYSSSLDQIGVLTQNVEDAAILYDAIAGYDKMDSTSANIEFIKTAPNLNANEKLKIAVIENYVNDADTEVKNALLKTIDMLKANGHEIVYKNLLDSKFDIAAYYIIATAEASANLSRYDGVRYGKRSENIQNLKEMYVNTRSEGFGEEVKRRILLGTFVLSSGYYDAYYIKAQKARAFIKAKYEEILQDCDLIFMPVTPTMAFKFDTQKSPMQTYLEDVYTISVNLAGLGGISVPVAKDKEGLNISAQLICKAYDEQTLLDGALSLEQMIKN</sequence>
<organism>
    <name type="scientific">Campylobacter jejuni subsp. doylei (strain ATCC BAA-1458 / RM4099 / 269.97)</name>
    <dbReference type="NCBI Taxonomy" id="360109"/>
    <lineage>
        <taxon>Bacteria</taxon>
        <taxon>Pseudomonadati</taxon>
        <taxon>Campylobacterota</taxon>
        <taxon>Epsilonproteobacteria</taxon>
        <taxon>Campylobacterales</taxon>
        <taxon>Campylobacteraceae</taxon>
        <taxon>Campylobacter</taxon>
    </lineage>
</organism>
<keyword id="KW-0067">ATP-binding</keyword>
<keyword id="KW-0436">Ligase</keyword>
<keyword id="KW-0547">Nucleotide-binding</keyword>
<keyword id="KW-0648">Protein biosynthesis</keyword>
<gene>
    <name evidence="1" type="primary">gatA</name>
    <name type="ordered locus">JJD26997_0663</name>
</gene>
<accession>A7H2U1</accession>
<dbReference type="EC" id="6.3.5.7" evidence="1"/>
<dbReference type="EMBL" id="CP000768">
    <property type="protein sequence ID" value="ABS43389.1"/>
    <property type="molecule type" value="Genomic_DNA"/>
</dbReference>
<dbReference type="SMR" id="A7H2U1"/>
<dbReference type="KEGG" id="cjd:JJD26997_0663"/>
<dbReference type="HOGENOM" id="CLU_009600_0_3_7"/>
<dbReference type="Proteomes" id="UP000002302">
    <property type="component" value="Chromosome"/>
</dbReference>
<dbReference type="GO" id="GO:0030956">
    <property type="term" value="C:glutamyl-tRNA(Gln) amidotransferase complex"/>
    <property type="evidence" value="ECO:0007669"/>
    <property type="project" value="InterPro"/>
</dbReference>
<dbReference type="GO" id="GO:0005524">
    <property type="term" value="F:ATP binding"/>
    <property type="evidence" value="ECO:0007669"/>
    <property type="project" value="UniProtKB-KW"/>
</dbReference>
<dbReference type="GO" id="GO:0050567">
    <property type="term" value="F:glutaminyl-tRNA synthase (glutamine-hydrolyzing) activity"/>
    <property type="evidence" value="ECO:0007669"/>
    <property type="project" value="UniProtKB-UniRule"/>
</dbReference>
<dbReference type="GO" id="GO:0006412">
    <property type="term" value="P:translation"/>
    <property type="evidence" value="ECO:0007669"/>
    <property type="project" value="UniProtKB-UniRule"/>
</dbReference>
<dbReference type="Gene3D" id="3.90.1300.10">
    <property type="entry name" value="Amidase signature (AS) domain"/>
    <property type="match status" value="1"/>
</dbReference>
<dbReference type="HAMAP" id="MF_00120">
    <property type="entry name" value="GatA"/>
    <property type="match status" value="1"/>
</dbReference>
<dbReference type="InterPro" id="IPR000120">
    <property type="entry name" value="Amidase"/>
</dbReference>
<dbReference type="InterPro" id="IPR020556">
    <property type="entry name" value="Amidase_CS"/>
</dbReference>
<dbReference type="InterPro" id="IPR023631">
    <property type="entry name" value="Amidase_dom"/>
</dbReference>
<dbReference type="InterPro" id="IPR036928">
    <property type="entry name" value="AS_sf"/>
</dbReference>
<dbReference type="InterPro" id="IPR004412">
    <property type="entry name" value="GatA"/>
</dbReference>
<dbReference type="NCBIfam" id="TIGR00132">
    <property type="entry name" value="gatA"/>
    <property type="match status" value="1"/>
</dbReference>
<dbReference type="PANTHER" id="PTHR11895:SF151">
    <property type="entry name" value="GLUTAMYL-TRNA(GLN) AMIDOTRANSFERASE SUBUNIT A"/>
    <property type="match status" value="1"/>
</dbReference>
<dbReference type="PANTHER" id="PTHR11895">
    <property type="entry name" value="TRANSAMIDASE"/>
    <property type="match status" value="1"/>
</dbReference>
<dbReference type="Pfam" id="PF01425">
    <property type="entry name" value="Amidase"/>
    <property type="match status" value="1"/>
</dbReference>
<dbReference type="SUPFAM" id="SSF75304">
    <property type="entry name" value="Amidase signature (AS) enzymes"/>
    <property type="match status" value="1"/>
</dbReference>
<dbReference type="PROSITE" id="PS00571">
    <property type="entry name" value="AMIDASES"/>
    <property type="match status" value="1"/>
</dbReference>